<accession>B0SAC5</accession>
<keyword id="KW-0963">Cytoplasm</keyword>
<keyword id="KW-0460">Magnesium</keyword>
<keyword id="KW-0479">Metal-binding</keyword>
<keyword id="KW-0566">Pantothenate biosynthesis</keyword>
<keyword id="KW-0808">Transferase</keyword>
<protein>
    <recommendedName>
        <fullName evidence="1">3-methyl-2-oxobutanoate hydroxymethyltransferase</fullName>
        <ecNumber evidence="1">2.1.2.11</ecNumber>
    </recommendedName>
    <alternativeName>
        <fullName evidence="1">Ketopantoate hydroxymethyltransferase</fullName>
        <shortName evidence="1">KPHMT</shortName>
    </alternativeName>
</protein>
<sequence length="268" mass="29483">MKNIILQYKKKYDAGEPISVVTCYDYTFATLFNRTDVDCLLVGDSLGMVIQGNQSTLPVTLDEIIYHTKAVCKGAPDKTIIADLPFLSYQTSIEEGIRSAGRVLKETNASCVKLEGDSEFIIELTKRMTESGIPVFAHLGLTPQSVHTLGGHRVQGKTEAARNKMIRKSRELAEAGAFALLLEMVPESLGKEITESIRIPTIGIGAGKYTSGQVLVMQDLLGLNEDFHPKFLKKFGNLSGAVKEAVNAYHKEVTKREYPSEAHVFLDT</sequence>
<reference key="1">
    <citation type="journal article" date="2008" name="PLoS ONE">
        <title>Genome sequence of the saprophyte Leptospira biflexa provides insights into the evolution of Leptospira and the pathogenesis of leptospirosis.</title>
        <authorList>
            <person name="Picardeau M."/>
            <person name="Bulach D.M."/>
            <person name="Bouchier C."/>
            <person name="Zuerner R.L."/>
            <person name="Zidane N."/>
            <person name="Wilson P.J."/>
            <person name="Creno S."/>
            <person name="Kuczek E.S."/>
            <person name="Bommezzadri S."/>
            <person name="Davis J.C."/>
            <person name="McGrath A."/>
            <person name="Johnson M.J."/>
            <person name="Boursaux-Eude C."/>
            <person name="Seemann T."/>
            <person name="Rouy Z."/>
            <person name="Coppel R.L."/>
            <person name="Rood J.I."/>
            <person name="Lajus A."/>
            <person name="Davies J.K."/>
            <person name="Medigue C."/>
            <person name="Adler B."/>
        </authorList>
    </citation>
    <scope>NUCLEOTIDE SEQUENCE [LARGE SCALE GENOMIC DNA]</scope>
    <source>
        <strain>Patoc 1 / Ames</strain>
    </source>
</reference>
<gene>
    <name evidence="1" type="primary">panB</name>
    <name type="ordered locus">LBF_0262</name>
</gene>
<comment type="function">
    <text evidence="1">Catalyzes the reversible reaction in which hydroxymethyl group from 5,10-methylenetetrahydrofolate is transferred onto alpha-ketoisovalerate to form ketopantoate.</text>
</comment>
<comment type="catalytic activity">
    <reaction evidence="1">
        <text>3-methyl-2-oxobutanoate + (6R)-5,10-methylene-5,6,7,8-tetrahydrofolate + H2O = 2-dehydropantoate + (6S)-5,6,7,8-tetrahydrofolate</text>
        <dbReference type="Rhea" id="RHEA:11824"/>
        <dbReference type="ChEBI" id="CHEBI:11561"/>
        <dbReference type="ChEBI" id="CHEBI:11851"/>
        <dbReference type="ChEBI" id="CHEBI:15377"/>
        <dbReference type="ChEBI" id="CHEBI:15636"/>
        <dbReference type="ChEBI" id="CHEBI:57453"/>
        <dbReference type="EC" id="2.1.2.11"/>
    </reaction>
</comment>
<comment type="cofactor">
    <cofactor evidence="1">
        <name>Mg(2+)</name>
        <dbReference type="ChEBI" id="CHEBI:18420"/>
    </cofactor>
    <text evidence="1">Binds 1 Mg(2+) ion per subunit.</text>
</comment>
<comment type="pathway">
    <text evidence="1">Cofactor biosynthesis; (R)-pantothenate biosynthesis; (R)-pantoate from 3-methyl-2-oxobutanoate: step 1/2.</text>
</comment>
<comment type="subunit">
    <text evidence="1">Homodecamer; pentamer of dimers.</text>
</comment>
<comment type="subcellular location">
    <subcellularLocation>
        <location evidence="1">Cytoplasm</location>
    </subcellularLocation>
</comment>
<comment type="similarity">
    <text evidence="1">Belongs to the PanB family.</text>
</comment>
<organism>
    <name type="scientific">Leptospira biflexa serovar Patoc (strain Patoc 1 / Ames)</name>
    <dbReference type="NCBI Taxonomy" id="355278"/>
    <lineage>
        <taxon>Bacteria</taxon>
        <taxon>Pseudomonadati</taxon>
        <taxon>Spirochaetota</taxon>
        <taxon>Spirochaetia</taxon>
        <taxon>Leptospirales</taxon>
        <taxon>Leptospiraceae</taxon>
        <taxon>Leptospira</taxon>
    </lineage>
</organism>
<proteinExistence type="inferred from homology"/>
<name>PANB_LEPBA</name>
<dbReference type="EC" id="2.1.2.11" evidence="1"/>
<dbReference type="EMBL" id="CP000777">
    <property type="protein sequence ID" value="ABZ92807.1"/>
    <property type="molecule type" value="Genomic_DNA"/>
</dbReference>
<dbReference type="RefSeq" id="WP_012387303.1">
    <property type="nucleotide sequence ID" value="NC_010842.1"/>
</dbReference>
<dbReference type="SMR" id="B0SAC5"/>
<dbReference type="KEGG" id="lbf:LBF_0262"/>
<dbReference type="HOGENOM" id="CLU_036645_1_0_12"/>
<dbReference type="UniPathway" id="UPA00028">
    <property type="reaction ID" value="UER00003"/>
</dbReference>
<dbReference type="GO" id="GO:0005737">
    <property type="term" value="C:cytoplasm"/>
    <property type="evidence" value="ECO:0007669"/>
    <property type="project" value="UniProtKB-SubCell"/>
</dbReference>
<dbReference type="GO" id="GO:0003864">
    <property type="term" value="F:3-methyl-2-oxobutanoate hydroxymethyltransferase activity"/>
    <property type="evidence" value="ECO:0007669"/>
    <property type="project" value="UniProtKB-UniRule"/>
</dbReference>
<dbReference type="GO" id="GO:0000287">
    <property type="term" value="F:magnesium ion binding"/>
    <property type="evidence" value="ECO:0007669"/>
    <property type="project" value="TreeGrafter"/>
</dbReference>
<dbReference type="GO" id="GO:0015940">
    <property type="term" value="P:pantothenate biosynthetic process"/>
    <property type="evidence" value="ECO:0007669"/>
    <property type="project" value="UniProtKB-UniRule"/>
</dbReference>
<dbReference type="CDD" id="cd06557">
    <property type="entry name" value="KPHMT-like"/>
    <property type="match status" value="1"/>
</dbReference>
<dbReference type="FunFam" id="3.20.20.60:FF:000003">
    <property type="entry name" value="3-methyl-2-oxobutanoate hydroxymethyltransferase"/>
    <property type="match status" value="1"/>
</dbReference>
<dbReference type="Gene3D" id="3.20.20.60">
    <property type="entry name" value="Phosphoenolpyruvate-binding domains"/>
    <property type="match status" value="1"/>
</dbReference>
<dbReference type="HAMAP" id="MF_00156">
    <property type="entry name" value="PanB"/>
    <property type="match status" value="1"/>
</dbReference>
<dbReference type="InterPro" id="IPR003700">
    <property type="entry name" value="Pantoate_hydroxy_MeTrfase"/>
</dbReference>
<dbReference type="InterPro" id="IPR015813">
    <property type="entry name" value="Pyrv/PenolPyrv_kinase-like_dom"/>
</dbReference>
<dbReference type="InterPro" id="IPR040442">
    <property type="entry name" value="Pyrv_kinase-like_dom_sf"/>
</dbReference>
<dbReference type="NCBIfam" id="TIGR00222">
    <property type="entry name" value="panB"/>
    <property type="match status" value="1"/>
</dbReference>
<dbReference type="NCBIfam" id="NF001452">
    <property type="entry name" value="PRK00311.1"/>
    <property type="match status" value="1"/>
</dbReference>
<dbReference type="PANTHER" id="PTHR20881">
    <property type="entry name" value="3-METHYL-2-OXOBUTANOATE HYDROXYMETHYLTRANSFERASE"/>
    <property type="match status" value="1"/>
</dbReference>
<dbReference type="PANTHER" id="PTHR20881:SF0">
    <property type="entry name" value="3-METHYL-2-OXOBUTANOATE HYDROXYMETHYLTRANSFERASE"/>
    <property type="match status" value="1"/>
</dbReference>
<dbReference type="Pfam" id="PF02548">
    <property type="entry name" value="Pantoate_transf"/>
    <property type="match status" value="1"/>
</dbReference>
<dbReference type="PIRSF" id="PIRSF000388">
    <property type="entry name" value="Pantoate_hydroxy_MeTrfase"/>
    <property type="match status" value="1"/>
</dbReference>
<dbReference type="SUPFAM" id="SSF51621">
    <property type="entry name" value="Phosphoenolpyruvate/pyruvate domain"/>
    <property type="match status" value="1"/>
</dbReference>
<feature type="chain" id="PRO_1000096978" description="3-methyl-2-oxobutanoate hydroxymethyltransferase">
    <location>
        <begin position="1"/>
        <end position="268"/>
    </location>
</feature>
<feature type="active site" description="Proton acceptor" evidence="1">
    <location>
        <position position="183"/>
    </location>
</feature>
<feature type="binding site" evidence="1">
    <location>
        <begin position="44"/>
        <end position="45"/>
    </location>
    <ligand>
        <name>3-methyl-2-oxobutanoate</name>
        <dbReference type="ChEBI" id="CHEBI:11851"/>
    </ligand>
</feature>
<feature type="binding site" evidence="1">
    <location>
        <position position="44"/>
    </location>
    <ligand>
        <name>Mg(2+)</name>
        <dbReference type="ChEBI" id="CHEBI:18420"/>
    </ligand>
</feature>
<feature type="binding site" evidence="1">
    <location>
        <position position="83"/>
    </location>
    <ligand>
        <name>3-methyl-2-oxobutanoate</name>
        <dbReference type="ChEBI" id="CHEBI:11851"/>
    </ligand>
</feature>
<feature type="binding site" evidence="1">
    <location>
        <position position="83"/>
    </location>
    <ligand>
        <name>Mg(2+)</name>
        <dbReference type="ChEBI" id="CHEBI:18420"/>
    </ligand>
</feature>
<feature type="binding site" evidence="1">
    <location>
        <position position="113"/>
    </location>
    <ligand>
        <name>3-methyl-2-oxobutanoate</name>
        <dbReference type="ChEBI" id="CHEBI:11851"/>
    </ligand>
</feature>
<feature type="binding site" evidence="1">
    <location>
        <position position="115"/>
    </location>
    <ligand>
        <name>Mg(2+)</name>
        <dbReference type="ChEBI" id="CHEBI:18420"/>
    </ligand>
</feature>
<evidence type="ECO:0000255" key="1">
    <source>
        <dbReference type="HAMAP-Rule" id="MF_00156"/>
    </source>
</evidence>